<feature type="initiator methionine" description="Removed" evidence="1">
    <location>
        <position position="1"/>
    </location>
</feature>
<feature type="chain" id="PRO_0000284143" description="Carbonyl reductase [NADPH] 1">
    <location>
        <begin position="2"/>
        <end position="277"/>
    </location>
</feature>
<feature type="active site" description="Proton acceptor" evidence="5">
    <location>
        <position position="194"/>
    </location>
</feature>
<feature type="binding site" evidence="1">
    <location>
        <begin position="10"/>
        <end position="34"/>
    </location>
    <ligand>
        <name>NADP(+)</name>
        <dbReference type="ChEBI" id="CHEBI:58349"/>
    </ligand>
</feature>
<feature type="binding site" evidence="1">
    <location>
        <begin position="63"/>
        <end position="64"/>
    </location>
    <ligand>
        <name>NADP(+)</name>
        <dbReference type="ChEBI" id="CHEBI:58349"/>
    </ligand>
</feature>
<feature type="binding site" evidence="1">
    <location>
        <position position="90"/>
    </location>
    <ligand>
        <name>NADP(+)</name>
        <dbReference type="ChEBI" id="CHEBI:58349"/>
    </ligand>
</feature>
<feature type="binding site" evidence="1">
    <location>
        <begin position="95"/>
        <end position="97"/>
    </location>
    <ligand>
        <name>glutathione</name>
        <dbReference type="ChEBI" id="CHEBI:57925"/>
    </ligand>
</feature>
<feature type="binding site" evidence="1">
    <location>
        <position position="106"/>
    </location>
    <ligand>
        <name>glutathione</name>
        <dbReference type="ChEBI" id="CHEBI:57925"/>
    </ligand>
</feature>
<feature type="binding site" evidence="1">
    <location>
        <position position="140"/>
    </location>
    <ligand>
        <name>substrate</name>
    </ligand>
</feature>
<feature type="binding site" evidence="1">
    <location>
        <begin position="193"/>
        <end position="194"/>
    </location>
    <ligand>
        <name>glutathione</name>
        <dbReference type="ChEBI" id="CHEBI:57925"/>
    </ligand>
</feature>
<feature type="binding site" evidence="1">
    <location>
        <begin position="194"/>
        <end position="198"/>
    </location>
    <ligand>
        <name>NADP(+)</name>
        <dbReference type="ChEBI" id="CHEBI:58349"/>
    </ligand>
</feature>
<feature type="binding site" evidence="1">
    <location>
        <begin position="231"/>
        <end position="233"/>
    </location>
    <ligand>
        <name>NADP(+)</name>
        <dbReference type="ChEBI" id="CHEBI:58349"/>
    </ligand>
</feature>
<feature type="modified residue" description="N-acetylserine" evidence="1">
    <location>
        <position position="2"/>
    </location>
</feature>
<feature type="modified residue" description="Phosphoserine" evidence="2">
    <location>
        <position position="2"/>
    </location>
</feature>
<feature type="modified residue" description="Phosphoserine" evidence="3">
    <location>
        <position position="30"/>
    </location>
</feature>
<feature type="modified residue" description="N6-1-carboxyethyl lysine" evidence="1">
    <location>
        <position position="239"/>
    </location>
</feature>
<name>CBR1_BOVIN</name>
<organism>
    <name type="scientific">Bos taurus</name>
    <name type="common">Bovine</name>
    <dbReference type="NCBI Taxonomy" id="9913"/>
    <lineage>
        <taxon>Eukaryota</taxon>
        <taxon>Metazoa</taxon>
        <taxon>Chordata</taxon>
        <taxon>Craniata</taxon>
        <taxon>Vertebrata</taxon>
        <taxon>Euteleostomi</taxon>
        <taxon>Mammalia</taxon>
        <taxon>Eutheria</taxon>
        <taxon>Laurasiatheria</taxon>
        <taxon>Artiodactyla</taxon>
        <taxon>Ruminantia</taxon>
        <taxon>Pecora</taxon>
        <taxon>Bovidae</taxon>
        <taxon>Bovinae</taxon>
        <taxon>Bos</taxon>
    </lineage>
</organism>
<sequence>MSSSNCVALVTGANKGIGFVIVRDLCRRFSGDVVLTARDEARGRAAVQQLQAEGLSPLFHQLDIDDRQSIRALRDFLRKEYGGLDVLVNNAGIAFKTADTTPFHIQAEVTMKTNFFGTRDVCTELLPLIKPQGRVVNVSSFVSVNSLKKCSRELQQKFRSETITEEELVGLMNKFVEDTKNGVHRKEGWPDTAYGVTKIGVTVLSRIHARKLSEQRGGDKILLNACCPGWVRTDMGGPKASKSPEEGAETPVYLALLPSDAEGPHGEFISEKRVVQW</sequence>
<evidence type="ECO:0000250" key="1">
    <source>
        <dbReference type="UniProtKB" id="P16152"/>
    </source>
</evidence>
<evidence type="ECO:0000250" key="2">
    <source>
        <dbReference type="UniProtKB" id="P47727"/>
    </source>
</evidence>
<evidence type="ECO:0000250" key="3">
    <source>
        <dbReference type="UniProtKB" id="P48758"/>
    </source>
</evidence>
<evidence type="ECO:0000250" key="4">
    <source>
        <dbReference type="UniProtKB" id="Q28960"/>
    </source>
</evidence>
<evidence type="ECO:0000255" key="5">
    <source>
        <dbReference type="PROSITE-ProRule" id="PRU10001"/>
    </source>
</evidence>
<evidence type="ECO:0000305" key="6"/>
<protein>
    <recommendedName>
        <fullName>Carbonyl reductase [NADPH] 1</fullName>
        <ecNumber evidence="1">1.1.1.184</ecNumber>
    </recommendedName>
    <alternativeName>
        <fullName>15-hydroxyprostaglandin dehydrogenase [NADP(+)]</fullName>
        <ecNumber evidence="4">1.1.1.196</ecNumber>
        <ecNumber evidence="1">1.1.1.197</ecNumber>
    </alternativeName>
    <alternativeName>
        <fullName evidence="4">20-beta-hydroxysteroid dehydrogenase</fullName>
    </alternativeName>
    <alternativeName>
        <fullName>Alcohol dehydrogenase [NAD(P)+] CBR1</fullName>
        <ecNumber evidence="1">1.1.1.71</ecNumber>
    </alternativeName>
    <alternativeName>
        <fullName>NADPH-dependent carbonyl reductase 1</fullName>
    </alternativeName>
    <alternativeName>
        <fullName evidence="4">Prostaglandin 9-ketoreductase</fullName>
        <shortName evidence="4">PG-9-KR</shortName>
    </alternativeName>
    <alternativeName>
        <fullName evidence="4">Prostaglandin-E(2) 9-reductase</fullName>
        <ecNumber evidence="4">1.1.1.189</ecNumber>
    </alternativeName>
</protein>
<proteinExistence type="evidence at transcript level"/>
<gene>
    <name evidence="1" type="primary">CBR1</name>
</gene>
<dbReference type="EC" id="1.1.1.184" evidence="1"/>
<dbReference type="EC" id="1.1.1.196" evidence="4"/>
<dbReference type="EC" id="1.1.1.197" evidence="1"/>
<dbReference type="EC" id="1.1.1.71" evidence="1"/>
<dbReference type="EC" id="1.1.1.189" evidence="4"/>
<dbReference type="EMBL" id="BC102943">
    <property type="protein sequence ID" value="AAI02944.1"/>
    <property type="molecule type" value="mRNA"/>
</dbReference>
<dbReference type="RefSeq" id="NP_001029685.1">
    <property type="nucleotide sequence ID" value="NM_001034513.1"/>
</dbReference>
<dbReference type="SMR" id="Q3SZD7"/>
<dbReference type="FunCoup" id="Q3SZD7">
    <property type="interactions" value="809"/>
</dbReference>
<dbReference type="STRING" id="9913.ENSBTAP00000072333"/>
<dbReference type="PaxDb" id="9913-ENSBTAP00000031784"/>
<dbReference type="PeptideAtlas" id="Q3SZD7"/>
<dbReference type="Ensembl" id="ENSBTAT00000031838.5">
    <property type="protein sequence ID" value="ENSBTAP00000031784.5"/>
    <property type="gene ID" value="ENSBTAG00000023384.6"/>
</dbReference>
<dbReference type="GeneID" id="515946"/>
<dbReference type="KEGG" id="bta:515946"/>
<dbReference type="CTD" id="873"/>
<dbReference type="VEuPathDB" id="HostDB:ENSBTAG00000023384"/>
<dbReference type="eggNOG" id="KOG1208">
    <property type="taxonomic scope" value="Eukaryota"/>
</dbReference>
<dbReference type="GeneTree" id="ENSGT00510000046499"/>
<dbReference type="InParanoid" id="Q3SZD7"/>
<dbReference type="OMA" id="GAQTPVM"/>
<dbReference type="OrthoDB" id="7289984at2759"/>
<dbReference type="Reactome" id="R-BTA-2162123">
    <property type="pathway name" value="Synthesis of Prostaglandins (PG) and Thromboxanes (TX)"/>
</dbReference>
<dbReference type="Proteomes" id="UP000009136">
    <property type="component" value="Chromosome 1"/>
</dbReference>
<dbReference type="Bgee" id="ENSBTAG00000023384">
    <property type="expression patterns" value="Expressed in cortex of kidney and 103 other cell types or tissues"/>
</dbReference>
<dbReference type="GO" id="GO:0005737">
    <property type="term" value="C:cytoplasm"/>
    <property type="evidence" value="ECO:0007669"/>
    <property type="project" value="UniProtKB-SubCell"/>
</dbReference>
<dbReference type="GO" id="GO:0047021">
    <property type="term" value="F:15-hydroxyprostaglandin dehydrogenase (NADP+) activity"/>
    <property type="evidence" value="ECO:0000250"/>
    <property type="project" value="UniProtKB"/>
</dbReference>
<dbReference type="GO" id="GO:0047020">
    <property type="term" value="F:15-hydroxyprostaglandin-D dehydrogenase (NADP+) activity"/>
    <property type="evidence" value="ECO:0007669"/>
    <property type="project" value="UniProtKB-EC"/>
</dbReference>
<dbReference type="GO" id="GO:0004090">
    <property type="term" value="F:carbonyl reductase (NADPH) activity"/>
    <property type="evidence" value="ECO:0000250"/>
    <property type="project" value="UniProtKB"/>
</dbReference>
<dbReference type="GO" id="GO:0050221">
    <property type="term" value="F:prostaglandin E2 9-reductase activity"/>
    <property type="evidence" value="ECO:0000250"/>
    <property type="project" value="UniProtKB"/>
</dbReference>
<dbReference type="GO" id="GO:0160163">
    <property type="term" value="F:S-nitrosoglutathione reductase (NADPH) activity"/>
    <property type="evidence" value="ECO:0007669"/>
    <property type="project" value="RHEA"/>
</dbReference>
<dbReference type="GO" id="GO:0006629">
    <property type="term" value="P:lipid metabolic process"/>
    <property type="evidence" value="ECO:0007669"/>
    <property type="project" value="UniProtKB-KW"/>
</dbReference>
<dbReference type="GO" id="GO:0042373">
    <property type="term" value="P:vitamin K metabolic process"/>
    <property type="evidence" value="ECO:0000250"/>
    <property type="project" value="UniProtKB"/>
</dbReference>
<dbReference type="GO" id="GO:0006805">
    <property type="term" value="P:xenobiotic metabolic process"/>
    <property type="evidence" value="ECO:0000250"/>
    <property type="project" value="UniProtKB"/>
</dbReference>
<dbReference type="CDD" id="cd05324">
    <property type="entry name" value="carb_red_PTCR-like_SDR_c"/>
    <property type="match status" value="1"/>
</dbReference>
<dbReference type="FunFam" id="3.40.50.720:FF:000164">
    <property type="entry name" value="Carbonyl reductase [NADPH] 1"/>
    <property type="match status" value="1"/>
</dbReference>
<dbReference type="Gene3D" id="3.40.50.720">
    <property type="entry name" value="NAD(P)-binding Rossmann-like Domain"/>
    <property type="match status" value="1"/>
</dbReference>
<dbReference type="InterPro" id="IPR045313">
    <property type="entry name" value="CBR1-like"/>
</dbReference>
<dbReference type="InterPro" id="IPR036291">
    <property type="entry name" value="NAD(P)-bd_dom_sf"/>
</dbReference>
<dbReference type="InterPro" id="IPR020904">
    <property type="entry name" value="Sc_DH/Rdtase_CS"/>
</dbReference>
<dbReference type="InterPro" id="IPR002347">
    <property type="entry name" value="SDR_fam"/>
</dbReference>
<dbReference type="PANTHER" id="PTHR43963">
    <property type="entry name" value="CARBONYL REDUCTASE 1-RELATED"/>
    <property type="match status" value="1"/>
</dbReference>
<dbReference type="PANTHER" id="PTHR43963:SF2">
    <property type="entry name" value="CARBONYL REDUCTASE [NADPH] 1"/>
    <property type="match status" value="1"/>
</dbReference>
<dbReference type="Pfam" id="PF00106">
    <property type="entry name" value="adh_short"/>
    <property type="match status" value="1"/>
</dbReference>
<dbReference type="PRINTS" id="PR00081">
    <property type="entry name" value="GDHRDH"/>
</dbReference>
<dbReference type="PRINTS" id="PR00080">
    <property type="entry name" value="SDRFAMILY"/>
</dbReference>
<dbReference type="SUPFAM" id="SSF51735">
    <property type="entry name" value="NAD(P)-binding Rossmann-fold domains"/>
    <property type="match status" value="1"/>
</dbReference>
<dbReference type="PROSITE" id="PS00061">
    <property type="entry name" value="ADH_SHORT"/>
    <property type="match status" value="1"/>
</dbReference>
<keyword id="KW-0007">Acetylation</keyword>
<keyword id="KW-0963">Cytoplasm</keyword>
<keyword id="KW-0443">Lipid metabolism</keyword>
<keyword id="KW-0521">NADP</keyword>
<keyword id="KW-0560">Oxidoreductase</keyword>
<keyword id="KW-0597">Phosphoprotein</keyword>
<keyword id="KW-1185">Reference proteome</keyword>
<accession>Q3SZD7</accession>
<comment type="function">
    <text evidence="1 4">NADPH-dependent reductase with broad substrate specificity. Catalyzes the reduction of a wide variety of carbonyl compounds including quinones, prostaglandins, menadione, plus various xenobiotics. Catalyzes the reduction of the antitumor anthracyclines doxorubicin and daunorubicin to the cardiotoxic compounds doxorubicinol and daunorubicinol (By similarity). Can convert prostaglandin E to prostaglandin F2-alpha (By similarity). Can bind glutathione, which explains its higher affinity for glutathione-conjugated substrates. Catalyzes the reduction of S-nitrosoglutathione. In addition, participates in the glucocorticoid metabolism by catalyzing the NADPH-dependent cortisol/corticosterone into 20beta-dihydrocortisol (20b-DHF) or 20beta-corticosterone (20b-DHB), which are weak agonists of NR3C1 and NR3C2 in adipose tissue (By similarity).</text>
</comment>
<comment type="catalytic activity">
    <reaction evidence="1">
        <text>a secondary alcohol + NADP(+) = a ketone + NADPH + H(+)</text>
        <dbReference type="Rhea" id="RHEA:19257"/>
        <dbReference type="ChEBI" id="CHEBI:15378"/>
        <dbReference type="ChEBI" id="CHEBI:17087"/>
        <dbReference type="ChEBI" id="CHEBI:35681"/>
        <dbReference type="ChEBI" id="CHEBI:57783"/>
        <dbReference type="ChEBI" id="CHEBI:58349"/>
        <dbReference type="EC" id="1.1.1.184"/>
    </reaction>
</comment>
<comment type="catalytic activity">
    <reaction evidence="4">
        <text>prostaglandin F2alpha + NADP(+) = prostaglandin E2 + NADPH + H(+)</text>
        <dbReference type="Rhea" id="RHEA:24508"/>
        <dbReference type="ChEBI" id="CHEBI:15378"/>
        <dbReference type="ChEBI" id="CHEBI:57404"/>
        <dbReference type="ChEBI" id="CHEBI:57783"/>
        <dbReference type="ChEBI" id="CHEBI:58349"/>
        <dbReference type="ChEBI" id="CHEBI:606564"/>
        <dbReference type="EC" id="1.1.1.189"/>
    </reaction>
    <physiologicalReaction direction="right-to-left" evidence="4">
        <dbReference type="Rhea" id="RHEA:24510"/>
    </physiologicalReaction>
</comment>
<comment type="catalytic activity">
    <reaction evidence="1">
        <text>prostaglandin E1 + NADP(+) = 15-oxoprostaglandin E1 + NADPH + H(+)</text>
        <dbReference type="Rhea" id="RHEA:11636"/>
        <dbReference type="ChEBI" id="CHEBI:15378"/>
        <dbReference type="ChEBI" id="CHEBI:57397"/>
        <dbReference type="ChEBI" id="CHEBI:57401"/>
        <dbReference type="ChEBI" id="CHEBI:57783"/>
        <dbReference type="ChEBI" id="CHEBI:58349"/>
        <dbReference type="EC" id="1.1.1.197"/>
    </reaction>
    <physiologicalReaction direction="left-to-right" evidence="1">
        <dbReference type="Rhea" id="RHEA:11637"/>
    </physiologicalReaction>
</comment>
<comment type="catalytic activity">
    <reaction evidence="1">
        <text>menadione + NADPH + H(+) = menadiol + NADP(+)</text>
        <dbReference type="Rhea" id="RHEA:63492"/>
        <dbReference type="ChEBI" id="CHEBI:6746"/>
        <dbReference type="ChEBI" id="CHEBI:15378"/>
        <dbReference type="ChEBI" id="CHEBI:28869"/>
        <dbReference type="ChEBI" id="CHEBI:57783"/>
        <dbReference type="ChEBI" id="CHEBI:58349"/>
    </reaction>
</comment>
<comment type="catalytic activity">
    <reaction evidence="4">
        <text>prostaglandin D2 + NADP(+) = 15-oxoprostaglandin D2 + NADPH + H(+)</text>
        <dbReference type="Rhea" id="RHEA:20744"/>
        <dbReference type="ChEBI" id="CHEBI:15378"/>
        <dbReference type="ChEBI" id="CHEBI:57406"/>
        <dbReference type="ChEBI" id="CHEBI:57408"/>
        <dbReference type="ChEBI" id="CHEBI:57783"/>
        <dbReference type="ChEBI" id="CHEBI:58349"/>
        <dbReference type="EC" id="1.1.1.196"/>
    </reaction>
    <physiologicalReaction direction="left-to-right" evidence="4">
        <dbReference type="Rhea" id="RHEA:20745"/>
    </physiologicalReaction>
</comment>
<comment type="catalytic activity">
    <reaction evidence="4">
        <text>prostaglandin E2 + NADP(+) = 15-oxoprostaglandin E2 + NADPH + H(+)</text>
        <dbReference type="Rhea" id="RHEA:63476"/>
        <dbReference type="ChEBI" id="CHEBI:15378"/>
        <dbReference type="ChEBI" id="CHEBI:57400"/>
        <dbReference type="ChEBI" id="CHEBI:57783"/>
        <dbReference type="ChEBI" id="CHEBI:58349"/>
        <dbReference type="ChEBI" id="CHEBI:606564"/>
    </reaction>
    <physiologicalReaction direction="left-to-right" evidence="4">
        <dbReference type="Rhea" id="RHEA:63477"/>
    </physiologicalReaction>
</comment>
<comment type="catalytic activity">
    <reaction evidence="4">
        <text>prostaglandin F2alpha + NADP(+) = 15-oxoprostaglandin F2alpha + NADPH + H(+)</text>
        <dbReference type="Rhea" id="RHEA:63480"/>
        <dbReference type="ChEBI" id="CHEBI:15378"/>
        <dbReference type="ChEBI" id="CHEBI:57404"/>
        <dbReference type="ChEBI" id="CHEBI:57783"/>
        <dbReference type="ChEBI" id="CHEBI:58349"/>
        <dbReference type="ChEBI" id="CHEBI:133409"/>
    </reaction>
    <physiologicalReaction direction="left-to-right" evidence="4">
        <dbReference type="Rhea" id="RHEA:63481"/>
    </physiologicalReaction>
</comment>
<comment type="catalytic activity">
    <reaction evidence="1">
        <text>daunorubicin + NADPH + H(+) = 13-dihydrodaunorubicin + NADP(+)</text>
        <dbReference type="Rhea" id="RHEA:63504"/>
        <dbReference type="ChEBI" id="CHEBI:15378"/>
        <dbReference type="ChEBI" id="CHEBI:57783"/>
        <dbReference type="ChEBI" id="CHEBI:58349"/>
        <dbReference type="ChEBI" id="CHEBI:64677"/>
        <dbReference type="ChEBI" id="CHEBI:75296"/>
    </reaction>
    <physiologicalReaction direction="left-to-right" evidence="1">
        <dbReference type="Rhea" id="RHEA:63505"/>
    </physiologicalReaction>
</comment>
<comment type="catalytic activity">
    <reaction evidence="4">
        <text>S-nitrosoglutathione + NADPH + H(+) = S-(hydroxysulfenamide)glutathione + NADP(+)</text>
        <dbReference type="Rhea" id="RHEA:63500"/>
        <dbReference type="ChEBI" id="CHEBI:15378"/>
        <dbReference type="ChEBI" id="CHEBI:57783"/>
        <dbReference type="ChEBI" id="CHEBI:58349"/>
        <dbReference type="ChEBI" id="CHEBI:145544"/>
        <dbReference type="ChEBI" id="CHEBI:229723"/>
    </reaction>
</comment>
<comment type="catalytic activity">
    <reaction evidence="1">
        <text>a primary alcohol + NADP(+) = an aldehyde + NADPH + H(+)</text>
        <dbReference type="Rhea" id="RHEA:15937"/>
        <dbReference type="ChEBI" id="CHEBI:15378"/>
        <dbReference type="ChEBI" id="CHEBI:15734"/>
        <dbReference type="ChEBI" id="CHEBI:17478"/>
        <dbReference type="ChEBI" id="CHEBI:57783"/>
        <dbReference type="ChEBI" id="CHEBI:58349"/>
        <dbReference type="EC" id="1.1.1.71"/>
    </reaction>
</comment>
<comment type="catalytic activity">
    <reaction evidence="1">
        <text>cortisol + NADPH + H(+) = 20beta-dihydrocortisol + NADP(+)</text>
        <dbReference type="Rhea" id="RHEA:70215"/>
        <dbReference type="ChEBI" id="CHEBI:15378"/>
        <dbReference type="ChEBI" id="CHEBI:17650"/>
        <dbReference type="ChEBI" id="CHEBI:57783"/>
        <dbReference type="ChEBI" id="CHEBI:58349"/>
        <dbReference type="ChEBI" id="CHEBI:139311"/>
    </reaction>
    <physiologicalReaction direction="left-to-right" evidence="1">
        <dbReference type="Rhea" id="RHEA:70216"/>
    </physiologicalReaction>
</comment>
<comment type="catalytic activity">
    <reaction evidence="3">
        <text>corticosterone + NADPH + H(+) = 20beta-dihydrocorticosterone + NADP(+)</text>
        <dbReference type="Rhea" id="RHEA:70219"/>
        <dbReference type="ChEBI" id="CHEBI:15378"/>
        <dbReference type="ChEBI" id="CHEBI:16827"/>
        <dbReference type="ChEBI" id="CHEBI:57783"/>
        <dbReference type="ChEBI" id="CHEBI:58349"/>
        <dbReference type="ChEBI" id="CHEBI:189050"/>
    </reaction>
    <physiologicalReaction direction="left-to-right" evidence="3">
        <dbReference type="Rhea" id="RHEA:70220"/>
    </physiologicalReaction>
</comment>
<comment type="subunit">
    <text evidence="4">Monomer.</text>
</comment>
<comment type="subcellular location">
    <subcellularLocation>
        <location evidence="4">Cytoplasm</location>
    </subcellularLocation>
</comment>
<comment type="similarity">
    <text evidence="6">Belongs to the short-chain dehydrogenases/reductases (SDR) family.</text>
</comment>
<reference key="1">
    <citation type="submission" date="2005-08" db="EMBL/GenBank/DDBJ databases">
        <authorList>
            <consortium name="NIH - Mammalian Gene Collection (MGC) project"/>
        </authorList>
    </citation>
    <scope>NUCLEOTIDE SEQUENCE [LARGE SCALE MRNA]</scope>
    <source>
        <strain>Crossbred X Angus</strain>
        <tissue>Ileum</tissue>
    </source>
</reference>